<organism>
    <name type="scientific">Buchnera aphidicola subsp. Cinara cedri (strain Cc)</name>
    <dbReference type="NCBI Taxonomy" id="372461"/>
    <lineage>
        <taxon>Bacteria</taxon>
        <taxon>Pseudomonadati</taxon>
        <taxon>Pseudomonadota</taxon>
        <taxon>Gammaproteobacteria</taxon>
        <taxon>Enterobacterales</taxon>
        <taxon>Erwiniaceae</taxon>
        <taxon>Buchnera</taxon>
    </lineage>
</organism>
<name>MNMG_BUCCC</name>
<comment type="function">
    <text evidence="1">NAD-binding protein involved in the addition of a carboxymethylaminomethyl (cmnm) group at the wobble position (U34) of certain tRNAs, forming tRNA-cmnm(5)s(2)U34.</text>
</comment>
<comment type="cofactor">
    <cofactor evidence="1">
        <name>FAD</name>
        <dbReference type="ChEBI" id="CHEBI:57692"/>
    </cofactor>
</comment>
<comment type="subunit">
    <text evidence="1">Homodimer. Heterotetramer of two MnmE and two MnmG subunits.</text>
</comment>
<comment type="subcellular location">
    <subcellularLocation>
        <location evidence="1">Cytoplasm</location>
    </subcellularLocation>
</comment>
<comment type="similarity">
    <text evidence="1">Belongs to the MnmG family.</text>
</comment>
<accession>Q058G2</accession>
<proteinExistence type="inferred from homology"/>
<evidence type="ECO:0000255" key="1">
    <source>
        <dbReference type="HAMAP-Rule" id="MF_00129"/>
    </source>
</evidence>
<gene>
    <name evidence="1" type="primary">mnmG</name>
    <name evidence="1" type="synonym">gidA</name>
    <name type="ordered locus">BCc_001</name>
</gene>
<protein>
    <recommendedName>
        <fullName evidence="1">tRNA uridine 5-carboxymethylaminomethyl modification enzyme MnmG</fullName>
    </recommendedName>
    <alternativeName>
        <fullName evidence="1">Glucose-inhibited division protein A</fullName>
    </alternativeName>
</protein>
<keyword id="KW-0963">Cytoplasm</keyword>
<keyword id="KW-0274">FAD</keyword>
<keyword id="KW-0285">Flavoprotein</keyword>
<keyword id="KW-0520">NAD</keyword>
<keyword id="KW-1185">Reference proteome</keyword>
<keyword id="KW-0819">tRNA processing</keyword>
<dbReference type="EMBL" id="CP000263">
    <property type="protein sequence ID" value="ABJ90487.1"/>
    <property type="molecule type" value="Genomic_DNA"/>
</dbReference>
<dbReference type="RefSeq" id="WP_011672406.1">
    <property type="nucleotide sequence ID" value="NC_008513.1"/>
</dbReference>
<dbReference type="SMR" id="Q058G2"/>
<dbReference type="STRING" id="372461.BCc_001"/>
<dbReference type="KEGG" id="bcc:BCc_001"/>
<dbReference type="eggNOG" id="COG0445">
    <property type="taxonomic scope" value="Bacteria"/>
</dbReference>
<dbReference type="HOGENOM" id="CLU_007831_2_2_6"/>
<dbReference type="OrthoDB" id="9815560at2"/>
<dbReference type="Proteomes" id="UP000000669">
    <property type="component" value="Chromosome"/>
</dbReference>
<dbReference type="GO" id="GO:0005829">
    <property type="term" value="C:cytosol"/>
    <property type="evidence" value="ECO:0007669"/>
    <property type="project" value="TreeGrafter"/>
</dbReference>
<dbReference type="GO" id="GO:0050660">
    <property type="term" value="F:flavin adenine dinucleotide binding"/>
    <property type="evidence" value="ECO:0007669"/>
    <property type="project" value="UniProtKB-UniRule"/>
</dbReference>
<dbReference type="GO" id="GO:0030488">
    <property type="term" value="P:tRNA methylation"/>
    <property type="evidence" value="ECO:0007669"/>
    <property type="project" value="TreeGrafter"/>
</dbReference>
<dbReference type="GO" id="GO:0002098">
    <property type="term" value="P:tRNA wobble uridine modification"/>
    <property type="evidence" value="ECO:0007669"/>
    <property type="project" value="InterPro"/>
</dbReference>
<dbReference type="FunFam" id="1.10.150.570:FF:000001">
    <property type="entry name" value="tRNA uridine 5-carboxymethylaminomethyl modification enzyme MnmG"/>
    <property type="match status" value="1"/>
</dbReference>
<dbReference type="FunFam" id="3.50.50.60:FF:000002">
    <property type="entry name" value="tRNA uridine 5-carboxymethylaminomethyl modification enzyme MnmG"/>
    <property type="match status" value="1"/>
</dbReference>
<dbReference type="FunFam" id="3.50.50.60:FF:000010">
    <property type="entry name" value="tRNA uridine 5-carboxymethylaminomethyl modification enzyme MnmG"/>
    <property type="match status" value="1"/>
</dbReference>
<dbReference type="Gene3D" id="3.50.50.60">
    <property type="entry name" value="FAD/NAD(P)-binding domain"/>
    <property type="match status" value="2"/>
</dbReference>
<dbReference type="Gene3D" id="1.10.150.570">
    <property type="entry name" value="GidA associated domain, C-terminal subdomain"/>
    <property type="match status" value="1"/>
</dbReference>
<dbReference type="Gene3D" id="1.10.10.1800">
    <property type="entry name" value="tRNA uridine 5-carboxymethylaminomethyl modification enzyme MnmG/GidA"/>
    <property type="match status" value="1"/>
</dbReference>
<dbReference type="HAMAP" id="MF_00129">
    <property type="entry name" value="MnmG_GidA"/>
    <property type="match status" value="1"/>
</dbReference>
<dbReference type="InterPro" id="IPR036188">
    <property type="entry name" value="FAD/NAD-bd_sf"/>
</dbReference>
<dbReference type="InterPro" id="IPR049312">
    <property type="entry name" value="GIDA_C_N"/>
</dbReference>
<dbReference type="InterPro" id="IPR004416">
    <property type="entry name" value="MnmG"/>
</dbReference>
<dbReference type="InterPro" id="IPR002218">
    <property type="entry name" value="MnmG-rel"/>
</dbReference>
<dbReference type="InterPro" id="IPR020595">
    <property type="entry name" value="MnmG-rel_CS"/>
</dbReference>
<dbReference type="InterPro" id="IPR026904">
    <property type="entry name" value="MnmG_C"/>
</dbReference>
<dbReference type="InterPro" id="IPR047001">
    <property type="entry name" value="MnmG_C_subdom"/>
</dbReference>
<dbReference type="InterPro" id="IPR044920">
    <property type="entry name" value="MnmG_C_subdom_sf"/>
</dbReference>
<dbReference type="InterPro" id="IPR040131">
    <property type="entry name" value="MnmG_N"/>
</dbReference>
<dbReference type="NCBIfam" id="TIGR00136">
    <property type="entry name" value="mnmG_gidA"/>
    <property type="match status" value="1"/>
</dbReference>
<dbReference type="PANTHER" id="PTHR11806">
    <property type="entry name" value="GLUCOSE INHIBITED DIVISION PROTEIN A"/>
    <property type="match status" value="1"/>
</dbReference>
<dbReference type="PANTHER" id="PTHR11806:SF0">
    <property type="entry name" value="PROTEIN MTO1 HOMOLOG, MITOCHONDRIAL"/>
    <property type="match status" value="1"/>
</dbReference>
<dbReference type="Pfam" id="PF01134">
    <property type="entry name" value="GIDA"/>
    <property type="match status" value="1"/>
</dbReference>
<dbReference type="Pfam" id="PF21680">
    <property type="entry name" value="GIDA_C_1st"/>
    <property type="match status" value="1"/>
</dbReference>
<dbReference type="Pfam" id="PF13932">
    <property type="entry name" value="SAM_GIDA_C"/>
    <property type="match status" value="1"/>
</dbReference>
<dbReference type="SMART" id="SM01228">
    <property type="entry name" value="GIDA_assoc_3"/>
    <property type="match status" value="1"/>
</dbReference>
<dbReference type="SUPFAM" id="SSF51905">
    <property type="entry name" value="FAD/NAD(P)-binding domain"/>
    <property type="match status" value="1"/>
</dbReference>
<dbReference type="PROSITE" id="PS01280">
    <property type="entry name" value="GIDA_1"/>
    <property type="match status" value="1"/>
</dbReference>
<dbReference type="PROSITE" id="PS01281">
    <property type="entry name" value="GIDA_2"/>
    <property type="match status" value="1"/>
</dbReference>
<sequence length="634" mass="72373">MFFYEKFDIIVIGAGHAGTEAASASSRMGQKTLLITQKRSTIGTLSCNPAIGGLGKSQLVKEIDALGGLMAKVIDYSGIQFRILNSKKGYAVRSTRAQADRFLYQKNMNYFLNNQKNLTIFEQEVSDIIIKNYQVQGIITSDGKIFKSSIVILTAGTFLNGKMYIGSDVFDGGRRNDVSASILANNLKKYFSKIGRLKTGTPPRLKKKSINFDILKKQYGDYPTPVFSFLGKIEQHPKQVPCYITYTNDHTHSIIKKNLHLSPLYSGSITGIGPRYCPSIEDKIIKFPDKISHQIFLEPEGINSEIIYPNGISTSLPKDIQVDLIQSISGLENAHIVHSGYAVEYDYFDPRDLKMTLESKKIKNLFMAGQINGTTGYEEAAAQGLIAGLNAALKIQCKDTWYPKRNEAYIGVLIDDLCSKGTSEPYRMFTSRAEYRLLLRENNADERLTTIGYKLGLIDDFRWKIFSKKQDSISRERNRLKNIILQPKTVFFSSNNKKTIYLKKKCTAFDLLRRPEISYNDLILFLNSFLKKKIVIKNKEITEEIETQSKYFGYIQRQEKEIKKYKYYENKKLYCIKDYREILGLSNEAIIKLNKYRPSSIGQALRISGITPVTISILLIFLKKRKKKKFYFKK</sequence>
<reference key="1">
    <citation type="journal article" date="2006" name="Science">
        <title>A small microbial genome: the end of a long symbiotic relationship?</title>
        <authorList>
            <person name="Perez-Brocal V."/>
            <person name="Gil R."/>
            <person name="Ramos S."/>
            <person name="Lamelas A."/>
            <person name="Postigo M."/>
            <person name="Michelena J.M."/>
            <person name="Silva F.J."/>
            <person name="Moya A."/>
            <person name="Latorre A."/>
        </authorList>
    </citation>
    <scope>NUCLEOTIDE SEQUENCE [LARGE SCALE GENOMIC DNA]</scope>
    <source>
        <strain>Cc</strain>
    </source>
</reference>
<feature type="chain" id="PRO_1000016559" description="tRNA uridine 5-carboxymethylaminomethyl modification enzyme MnmG">
    <location>
        <begin position="1"/>
        <end position="634"/>
    </location>
</feature>
<feature type="binding site" evidence="1">
    <location>
        <begin position="13"/>
        <end position="18"/>
    </location>
    <ligand>
        <name>FAD</name>
        <dbReference type="ChEBI" id="CHEBI:57692"/>
    </ligand>
</feature>
<feature type="binding site" evidence="1">
    <location>
        <begin position="273"/>
        <end position="287"/>
    </location>
    <ligand>
        <name>NAD(+)</name>
        <dbReference type="ChEBI" id="CHEBI:57540"/>
    </ligand>
</feature>